<protein>
    <recommendedName>
        <fullName evidence="1">N-acetyl-gamma-glutamyl-phosphate reductase</fullName>
        <shortName evidence="1">AGPR</shortName>
        <ecNumber evidence="1">1.2.1.38</ecNumber>
    </recommendedName>
    <alternativeName>
        <fullName evidence="1">N-acetyl-glutamate semialdehyde dehydrogenase</fullName>
        <shortName evidence="1">NAGSA dehydrogenase</shortName>
    </alternativeName>
</protein>
<name>ARGC_RHIEC</name>
<sequence>MAPKIFIDGEHGTTGLQIRTRMAGRRDVELLSIPEAERRNAAMREDMLNSADIAMLCLPDDASKEAVQMVSANNNVRVIDTSTAFRVNPGWAYGFAEMDKEQAEKIASARFVSNPGCYPTGAIGLIRPLRAAGILPDGYPVTVNAVSGYSGGGKQMIAQMENPDHPDAITAPHFLYGLPLTHKHVPEMTVHGLLDRAPIFSPSVGKFAQGMIVQVPLHLDDLAEGTTMESIHAALVAHYAGQEIVTVVPLSDSKALARVNAVELEGKDTMKLFVFGTPGGSQVNLVALLDNLGKGASGAAVQNMDLMLAS</sequence>
<gene>
    <name evidence="1" type="primary">argC</name>
    <name type="ordered locus">RHE_CH01567</name>
</gene>
<proteinExistence type="inferred from homology"/>
<dbReference type="EC" id="1.2.1.38" evidence="1"/>
<dbReference type="EMBL" id="CP000133">
    <property type="protein sequence ID" value="ABC90369.1"/>
    <property type="molecule type" value="Genomic_DNA"/>
</dbReference>
<dbReference type="RefSeq" id="WP_011424894.1">
    <property type="nucleotide sequence ID" value="NC_007761.1"/>
</dbReference>
<dbReference type="SMR" id="Q2K9W7"/>
<dbReference type="KEGG" id="ret:RHE_CH01567"/>
<dbReference type="eggNOG" id="COG0002">
    <property type="taxonomic scope" value="Bacteria"/>
</dbReference>
<dbReference type="HOGENOM" id="CLU_077118_0_0_5"/>
<dbReference type="OrthoDB" id="9801289at2"/>
<dbReference type="UniPathway" id="UPA00068">
    <property type="reaction ID" value="UER00108"/>
</dbReference>
<dbReference type="Proteomes" id="UP000001936">
    <property type="component" value="Chromosome"/>
</dbReference>
<dbReference type="GO" id="GO:0005737">
    <property type="term" value="C:cytoplasm"/>
    <property type="evidence" value="ECO:0007669"/>
    <property type="project" value="UniProtKB-SubCell"/>
</dbReference>
<dbReference type="GO" id="GO:0003942">
    <property type="term" value="F:N-acetyl-gamma-glutamyl-phosphate reductase activity"/>
    <property type="evidence" value="ECO:0007669"/>
    <property type="project" value="UniProtKB-UniRule"/>
</dbReference>
<dbReference type="GO" id="GO:0051287">
    <property type="term" value="F:NAD binding"/>
    <property type="evidence" value="ECO:0007669"/>
    <property type="project" value="InterPro"/>
</dbReference>
<dbReference type="GO" id="GO:0006526">
    <property type="term" value="P:L-arginine biosynthetic process"/>
    <property type="evidence" value="ECO:0007669"/>
    <property type="project" value="UniProtKB-UniRule"/>
</dbReference>
<dbReference type="CDD" id="cd23935">
    <property type="entry name" value="AGPR_2_C"/>
    <property type="match status" value="1"/>
</dbReference>
<dbReference type="CDD" id="cd17896">
    <property type="entry name" value="AGPR_2_N"/>
    <property type="match status" value="1"/>
</dbReference>
<dbReference type="Gene3D" id="3.30.360.10">
    <property type="entry name" value="Dihydrodipicolinate Reductase, domain 2"/>
    <property type="match status" value="1"/>
</dbReference>
<dbReference type="Gene3D" id="3.40.50.720">
    <property type="entry name" value="NAD(P)-binding Rossmann-like Domain"/>
    <property type="match status" value="1"/>
</dbReference>
<dbReference type="HAMAP" id="MF_01110">
    <property type="entry name" value="ArgC_type2"/>
    <property type="match status" value="1"/>
</dbReference>
<dbReference type="InterPro" id="IPR023013">
    <property type="entry name" value="AGPR_AS"/>
</dbReference>
<dbReference type="InterPro" id="IPR010136">
    <property type="entry name" value="AGPR_type-2"/>
</dbReference>
<dbReference type="InterPro" id="IPR036291">
    <property type="entry name" value="NAD(P)-bd_dom_sf"/>
</dbReference>
<dbReference type="InterPro" id="IPR050085">
    <property type="entry name" value="NAGSA_dehydrogenase"/>
</dbReference>
<dbReference type="InterPro" id="IPR000534">
    <property type="entry name" value="Semialdehyde_DH_NAD-bd"/>
</dbReference>
<dbReference type="NCBIfam" id="TIGR01851">
    <property type="entry name" value="argC_other"/>
    <property type="match status" value="1"/>
</dbReference>
<dbReference type="PANTHER" id="PTHR32338:SF10">
    <property type="entry name" value="N-ACETYL-GAMMA-GLUTAMYL-PHOSPHATE REDUCTASE, CHLOROPLASTIC-RELATED"/>
    <property type="match status" value="1"/>
</dbReference>
<dbReference type="PANTHER" id="PTHR32338">
    <property type="entry name" value="N-ACETYL-GAMMA-GLUTAMYL-PHOSPHATE REDUCTASE, CHLOROPLASTIC-RELATED-RELATED"/>
    <property type="match status" value="1"/>
</dbReference>
<dbReference type="Pfam" id="PF01118">
    <property type="entry name" value="Semialdhyde_dh"/>
    <property type="match status" value="1"/>
</dbReference>
<dbReference type="Pfam" id="PF22698">
    <property type="entry name" value="Semialdhyde_dhC_1"/>
    <property type="match status" value="1"/>
</dbReference>
<dbReference type="SMART" id="SM00859">
    <property type="entry name" value="Semialdhyde_dh"/>
    <property type="match status" value="1"/>
</dbReference>
<dbReference type="SUPFAM" id="SSF55347">
    <property type="entry name" value="Glyceraldehyde-3-phosphate dehydrogenase-like, C-terminal domain"/>
    <property type="match status" value="1"/>
</dbReference>
<dbReference type="SUPFAM" id="SSF51735">
    <property type="entry name" value="NAD(P)-binding Rossmann-fold domains"/>
    <property type="match status" value="1"/>
</dbReference>
<dbReference type="PROSITE" id="PS01224">
    <property type="entry name" value="ARGC"/>
    <property type="match status" value="1"/>
</dbReference>
<comment type="function">
    <text evidence="1">Catalyzes the NADPH-dependent reduction of N-acetyl-5-glutamyl phosphate to yield N-acetyl-L-glutamate 5-semialdehyde.</text>
</comment>
<comment type="catalytic activity">
    <reaction evidence="1">
        <text>N-acetyl-L-glutamate 5-semialdehyde + phosphate + NADP(+) = N-acetyl-L-glutamyl 5-phosphate + NADPH + H(+)</text>
        <dbReference type="Rhea" id="RHEA:21588"/>
        <dbReference type="ChEBI" id="CHEBI:15378"/>
        <dbReference type="ChEBI" id="CHEBI:29123"/>
        <dbReference type="ChEBI" id="CHEBI:43474"/>
        <dbReference type="ChEBI" id="CHEBI:57783"/>
        <dbReference type="ChEBI" id="CHEBI:57936"/>
        <dbReference type="ChEBI" id="CHEBI:58349"/>
        <dbReference type="EC" id="1.2.1.38"/>
    </reaction>
</comment>
<comment type="pathway">
    <text evidence="1">Amino-acid biosynthesis; L-arginine biosynthesis; N(2)-acetyl-L-ornithine from L-glutamate: step 3/4.</text>
</comment>
<comment type="subcellular location">
    <subcellularLocation>
        <location evidence="1">Cytoplasm</location>
    </subcellularLocation>
</comment>
<comment type="similarity">
    <text evidence="1">Belongs to the NAGSA dehydrogenase family. Type 2 subfamily.</text>
</comment>
<reference key="1">
    <citation type="journal article" date="2006" name="Proc. Natl. Acad. Sci. U.S.A.">
        <title>The partitioned Rhizobium etli genome: genetic and metabolic redundancy in seven interacting replicons.</title>
        <authorList>
            <person name="Gonzalez V."/>
            <person name="Santamaria R.I."/>
            <person name="Bustos P."/>
            <person name="Hernandez-Gonzalez I."/>
            <person name="Medrano-Soto A."/>
            <person name="Moreno-Hagelsieb G."/>
            <person name="Janga S.C."/>
            <person name="Ramirez M.A."/>
            <person name="Jimenez-Jacinto V."/>
            <person name="Collado-Vides J."/>
            <person name="Davila G."/>
        </authorList>
    </citation>
    <scope>NUCLEOTIDE SEQUENCE [LARGE SCALE GENOMIC DNA]</scope>
    <source>
        <strain>ATCC 51251 / DSM 11541 / JCM 21823 / NBRC 15573 / CFN 42</strain>
    </source>
</reference>
<evidence type="ECO:0000255" key="1">
    <source>
        <dbReference type="HAMAP-Rule" id="MF_01110"/>
    </source>
</evidence>
<feature type="chain" id="PRO_1000065144" description="N-acetyl-gamma-glutamyl-phosphate reductase">
    <location>
        <begin position="1"/>
        <end position="310"/>
    </location>
</feature>
<feature type="active site" evidence="1">
    <location>
        <position position="117"/>
    </location>
</feature>
<organism>
    <name type="scientific">Rhizobium etli (strain ATCC 51251 / DSM 11541 / JCM 21823 / NBRC 15573 / CFN 42)</name>
    <dbReference type="NCBI Taxonomy" id="347834"/>
    <lineage>
        <taxon>Bacteria</taxon>
        <taxon>Pseudomonadati</taxon>
        <taxon>Pseudomonadota</taxon>
        <taxon>Alphaproteobacteria</taxon>
        <taxon>Hyphomicrobiales</taxon>
        <taxon>Rhizobiaceae</taxon>
        <taxon>Rhizobium/Agrobacterium group</taxon>
        <taxon>Rhizobium</taxon>
    </lineage>
</organism>
<accession>Q2K9W7</accession>
<keyword id="KW-0028">Amino-acid biosynthesis</keyword>
<keyword id="KW-0055">Arginine biosynthesis</keyword>
<keyword id="KW-0963">Cytoplasm</keyword>
<keyword id="KW-0521">NADP</keyword>
<keyword id="KW-0560">Oxidoreductase</keyword>
<keyword id="KW-1185">Reference proteome</keyword>